<name>PHNL_MEGGA</name>
<comment type="catalytic activity">
    <reaction>
        <text>2 Fe(III)-[cytochrome c3] + H2 = 2 Fe(II)-[cytochrome c3] + 2 H(+)</text>
        <dbReference type="Rhea" id="RHEA:20625"/>
        <dbReference type="Rhea" id="RHEA-COMP:11576"/>
        <dbReference type="Rhea" id="RHEA-COMP:11577"/>
        <dbReference type="ChEBI" id="CHEBI:15378"/>
        <dbReference type="ChEBI" id="CHEBI:18276"/>
        <dbReference type="ChEBI" id="CHEBI:29033"/>
        <dbReference type="ChEBI" id="CHEBI:29034"/>
        <dbReference type="EC" id="1.12.2.1"/>
    </reaction>
</comment>
<comment type="cofactor">
    <cofactor>
        <name>Ni(2+)</name>
        <dbReference type="ChEBI" id="CHEBI:49786"/>
    </cofactor>
    <text>Binds 1 nickel ion per subunit.</text>
</comment>
<comment type="subunit">
    <text>Heterodimer of a large and a small subunit.</text>
</comment>
<comment type="subcellular location">
    <subcellularLocation>
        <location>Periplasm</location>
    </subcellularLocation>
</comment>
<comment type="miscellaneous">
    <text>Perhaps the leader of the small subunit serves as a transport vehicle for both subunits.</text>
</comment>
<comment type="similarity">
    <text evidence="4">Belongs to the [NiFe]/[NiFeSe] hydrogenase large subunit family.</text>
</comment>
<keyword id="KW-0002">3D-structure</keyword>
<keyword id="KW-0903">Direct protein sequencing</keyword>
<keyword id="KW-0479">Metal-binding</keyword>
<keyword id="KW-0533">Nickel</keyword>
<keyword id="KW-0560">Oxidoreductase</keyword>
<keyword id="KW-0574">Periplasm</keyword>
<protein>
    <recommendedName>
        <fullName>Periplasmic [NiFe] hydrogenase large subunit</fullName>
        <ecNumber>1.12.2.1</ecNumber>
    </recommendedName>
    <alternativeName>
        <fullName>NiFe hydrogenlyase large chain</fullName>
    </alternativeName>
</protein>
<feature type="initiator methionine" description="Removed" evidence="1 2">
    <location>
        <position position="1"/>
    </location>
</feature>
<feature type="chain" id="PRO_0000013403" description="Periplasmic [NiFe] hydrogenase large subunit">
    <location>
        <begin position="2"/>
        <end position="536"/>
    </location>
</feature>
<feature type="propeptide" id="PRO_0000013404">
    <location>
        <begin position="537"/>
        <end position="551"/>
    </location>
</feature>
<feature type="binding site" evidence="3">
    <location>
        <position position="65"/>
    </location>
    <ligand>
        <name>Ni(2+)</name>
        <dbReference type="ChEBI" id="CHEBI:49786"/>
    </ligand>
</feature>
<feature type="binding site">
    <location>
        <position position="68"/>
    </location>
    <ligand>
        <name>Ni(2+)</name>
        <dbReference type="ChEBI" id="CHEBI:49786"/>
    </ligand>
</feature>
<feature type="binding site" evidence="3">
    <location>
        <position position="530"/>
    </location>
    <ligand>
        <name>Ni(2+)</name>
        <dbReference type="ChEBI" id="CHEBI:49786"/>
    </ligand>
</feature>
<feature type="binding site">
    <location>
        <position position="533"/>
    </location>
    <ligand>
        <name>Ni(2+)</name>
        <dbReference type="ChEBI" id="CHEBI:49786"/>
    </ligand>
</feature>
<feature type="strand" evidence="6">
    <location>
        <begin position="8"/>
        <end position="11"/>
    </location>
</feature>
<feature type="strand" evidence="6">
    <location>
        <begin position="16"/>
        <end position="19"/>
    </location>
</feature>
<feature type="strand" evidence="6">
    <location>
        <begin position="21"/>
        <end position="28"/>
    </location>
</feature>
<feature type="strand" evidence="6">
    <location>
        <begin position="31"/>
        <end position="39"/>
    </location>
</feature>
<feature type="helix" evidence="6">
    <location>
        <begin position="45"/>
        <end position="49"/>
    </location>
</feature>
<feature type="helix" evidence="6">
    <location>
        <begin position="54"/>
        <end position="56"/>
    </location>
</feature>
<feature type="helix" evidence="6">
    <location>
        <begin position="57"/>
        <end position="62"/>
    </location>
</feature>
<feature type="strand" evidence="6">
    <location>
        <begin position="66"/>
        <end position="68"/>
    </location>
</feature>
<feature type="helix" evidence="6">
    <location>
        <begin position="71"/>
        <end position="84"/>
    </location>
</feature>
<feature type="helix" evidence="6">
    <location>
        <begin position="90"/>
        <end position="114"/>
    </location>
</feature>
<feature type="helix" evidence="6">
    <location>
        <begin position="117"/>
        <end position="119"/>
    </location>
</feature>
<feature type="helix" evidence="6">
    <location>
        <begin position="124"/>
        <end position="128"/>
    </location>
</feature>
<feature type="helix" evidence="6">
    <location>
        <begin position="131"/>
        <end position="141"/>
    </location>
</feature>
<feature type="helix" evidence="6">
    <location>
        <begin position="148"/>
        <end position="163"/>
    </location>
</feature>
<feature type="helix" evidence="6">
    <location>
        <begin position="168"/>
        <end position="170"/>
    </location>
</feature>
<feature type="turn" evidence="6">
    <location>
        <begin position="174"/>
        <end position="177"/>
    </location>
</feature>
<feature type="helix" evidence="6">
    <location>
        <begin position="186"/>
        <end position="214"/>
    </location>
</feature>
<feature type="strand" evidence="6">
    <location>
        <begin position="215"/>
        <end position="219"/>
    </location>
</feature>
<feature type="helix" evidence="6">
    <location>
        <begin position="231"/>
        <end position="234"/>
    </location>
</feature>
<feature type="helix" evidence="6">
    <location>
        <begin position="236"/>
        <end position="255"/>
    </location>
</feature>
<feature type="helix" evidence="6">
    <location>
        <begin position="257"/>
        <end position="267"/>
    </location>
</feature>
<feature type="helix" evidence="6">
    <location>
        <begin position="268"/>
        <end position="273"/>
    </location>
</feature>
<feature type="strand" evidence="6">
    <location>
        <begin position="280"/>
        <end position="282"/>
    </location>
</feature>
<feature type="helix" evidence="6">
    <location>
        <begin position="293"/>
        <end position="295"/>
    </location>
</feature>
<feature type="strand" evidence="6">
    <location>
        <begin position="296"/>
        <end position="298"/>
    </location>
</feature>
<feature type="strand" evidence="6">
    <location>
        <begin position="301"/>
        <end position="303"/>
    </location>
</feature>
<feature type="strand" evidence="7">
    <location>
        <begin position="307"/>
        <end position="312"/>
    </location>
</feature>
<feature type="helix" evidence="6">
    <location>
        <begin position="316"/>
        <end position="318"/>
    </location>
</feature>
<feature type="strand" evidence="6">
    <location>
        <begin position="319"/>
        <end position="322"/>
    </location>
</feature>
<feature type="turn" evidence="6">
    <location>
        <begin position="324"/>
        <end position="327"/>
    </location>
</feature>
<feature type="strand" evidence="6">
    <location>
        <begin position="328"/>
        <end position="331"/>
    </location>
</feature>
<feature type="helix" evidence="6">
    <location>
        <begin position="336"/>
        <end position="338"/>
    </location>
</feature>
<feature type="helix" evidence="6">
    <location>
        <begin position="350"/>
        <end position="352"/>
    </location>
</feature>
<feature type="strand" evidence="5">
    <location>
        <begin position="355"/>
        <end position="357"/>
    </location>
</feature>
<feature type="strand" evidence="6">
    <location>
        <begin position="359"/>
        <end position="362"/>
    </location>
</feature>
<feature type="helix" evidence="6">
    <location>
        <begin position="371"/>
        <end position="380"/>
    </location>
</feature>
<feature type="helix" evidence="6">
    <location>
        <begin position="384"/>
        <end position="397"/>
    </location>
</feature>
<feature type="helix" evidence="6">
    <location>
        <begin position="401"/>
        <end position="404"/>
    </location>
</feature>
<feature type="helix" evidence="6">
    <location>
        <begin position="407"/>
        <end position="437"/>
    </location>
</feature>
<feature type="strand" evidence="6">
    <location>
        <begin position="451"/>
        <end position="461"/>
    </location>
</feature>
<feature type="strand" evidence="6">
    <location>
        <begin position="464"/>
        <end position="473"/>
    </location>
</feature>
<feature type="strand" evidence="6">
    <location>
        <begin position="476"/>
        <end position="483"/>
    </location>
</feature>
<feature type="helix" evidence="6">
    <location>
        <begin position="485"/>
        <end position="490"/>
    </location>
</feature>
<feature type="helix" evidence="6">
    <location>
        <begin position="501"/>
        <end position="506"/>
    </location>
</feature>
<feature type="helix" evidence="6">
    <location>
        <begin position="518"/>
        <end position="526"/>
    </location>
</feature>
<feature type="helix" evidence="6">
    <location>
        <begin position="531"/>
        <end position="535"/>
    </location>
</feature>
<organism>
    <name type="scientific">Megalodesulfovibrio gigas</name>
    <name type="common">Desulfovibrio gigas</name>
    <dbReference type="NCBI Taxonomy" id="879"/>
    <lineage>
        <taxon>Bacteria</taxon>
        <taxon>Pseudomonadati</taxon>
        <taxon>Thermodesulfobacteriota</taxon>
        <taxon>Desulfovibrionia</taxon>
        <taxon>Desulfovibrionales</taxon>
        <taxon>Desulfovibrionaceae</taxon>
        <taxon>Megalodesulfovibrio</taxon>
    </lineage>
</organism>
<sequence length="551" mass="61480">MSEMQGNKIVVDPITRIEGHLRIEVEVEGGKIKNAWSMSTLFRGLEMILKGRDPRDAQHFTQRACGVCTYVHALASVRAVDNCVGVKIPENATLMRNLTMGAQYMHDHLVHFYHLHALDWVNVANALNADPAKAARLANDLSPRKTTTESLKAVQAKVKALVESGQLGIFTNAYFLGGHPAYVLPAEVDLIATAHYLEALRVQVKAARAMAIFGAKNPHTQFTVVGGCTNYDSLRPERIAEFRKLYKEVREFIEQVYITDLLAVAGFYKNWAGIGKTSNFLTCGEFPTDEYDLNSRYTPQGVIWGNDLSKVDDFNPDLIEEHVKYSWYEGADAHHPYKGVTKPKWTEFHGEDRYSWMKAPRYKGEAFEVGPLASVLVAYAKKHEPTVKAVDLVLKTLGVGPEALFSTLGRTAARGIQCLTAAQEVEVWLDKLEANVKAGKDDLYTDWQYPTESQGVGFVNAPRGMLSHWIVQRGGKIENFQHVVPSTWNLGPRCAERKLSAVEQALIGTPIADPKRPVEILRTVHSYDPCIACGVHVIDPESNQVHKFRIL</sequence>
<accession>P12944</accession>
<proteinExistence type="evidence at protein level"/>
<gene>
    <name type="primary">hydB</name>
</gene>
<evidence type="ECO:0000269" key="1">
    <source>
    </source>
</evidence>
<evidence type="ECO:0000269" key="2">
    <source>
    </source>
</evidence>
<evidence type="ECO:0000269" key="3">
    <source>
    </source>
</evidence>
<evidence type="ECO:0000305" key="4"/>
<evidence type="ECO:0007829" key="5">
    <source>
        <dbReference type="PDB" id="1FRV"/>
    </source>
</evidence>
<evidence type="ECO:0007829" key="6">
    <source>
        <dbReference type="PDB" id="1YQ9"/>
    </source>
</evidence>
<evidence type="ECO:0007829" key="7">
    <source>
        <dbReference type="PDB" id="2FRV"/>
    </source>
</evidence>
<reference key="1">
    <citation type="journal article" date="1987" name="DNA">
        <title>Cloning, characterization, and sequencing of the genes encoding the large and small subunits of the periplasmic [NiFe]hydrogenase of Desulfovibrio gigas.</title>
        <authorList>
            <person name="Li C."/>
            <person name="Peck H.D. Jr."/>
            <person name="le Gall J."/>
            <person name="Przybyla A.E."/>
        </authorList>
    </citation>
    <scope>NUCLEOTIDE SEQUENCE [GENOMIC DNA]</scope>
    <scope>PROTEIN SEQUENCE OF 2-31</scope>
</reference>
<reference key="2">
    <citation type="journal article" date="1989" name="J. Bacteriol.">
        <title>Analysis and comparison of nucleotide sequences encoding the genes for [NiFe] and [NiFeSe] hydrogenases from Desulfovibrio gigas and Desulfovibrio baculatus.</title>
        <authorList>
            <person name="Voordouw G."/>
            <person name="Menon N.K."/>
            <person name="le Gall J."/>
            <person name="Choi E.S."/>
            <person name="Peck H.D. Jr."/>
            <person name="Przybyla A.E."/>
        </authorList>
    </citation>
    <scope>NUCLEOTIDE SEQUENCE [GENOMIC DNA]</scope>
    <scope>SEQUENCE REVISION</scope>
</reference>
<reference key="3">
    <citation type="journal article" date="1987" name="Biochem. Biophys. Res. Commun.">
        <title>Identification of three classes of hydrogenase in the genus, Desulfovibrio.</title>
        <authorList>
            <person name="Prickril B.C."/>
            <person name="He S.H."/>
            <person name="Li C."/>
            <person name="Menon N.K."/>
            <person name="Choi E.S."/>
            <person name="Przybyla A.E."/>
            <person name="Dervartanian D.V."/>
            <person name="Peck H.D. Jr."/>
            <person name="Fauque G."/>
            <person name="le Gall J."/>
            <person name="Teixeira M."/>
            <person name="Moura I."/>
            <person name="Moura J.J.G."/>
            <person name="Patil D."/>
            <person name="Huynh B.H."/>
        </authorList>
    </citation>
    <scope>PROTEIN SEQUENCE OF 2-30</scope>
</reference>
<reference key="4">
    <citation type="journal article" date="1995" name="Nature">
        <title>Crystal structure of the nickel-iron hydrogenase from Desulfovibrio gigas.</title>
        <authorList>
            <person name="Volbeda A."/>
            <person name="Charon M.-H."/>
            <person name="Piras C."/>
            <person name="Hatchikian E.C."/>
            <person name="Frey M."/>
            <person name="Fontecilla-Camps J.-C."/>
        </authorList>
    </citation>
    <scope>X-RAY CRYSTALLOGRAPHY (2.85 ANGSTROMS)</scope>
</reference>
<dbReference type="EC" id="1.12.2.1"/>
<dbReference type="EMBL" id="M18083">
    <property type="protein sequence ID" value="AAA23378.1"/>
    <property type="status" value="ALT_SEQ"/>
    <property type="molecule type" value="Genomic_DNA"/>
</dbReference>
<dbReference type="PIR" id="B32315">
    <property type="entry name" value="HQDVLG"/>
</dbReference>
<dbReference type="PDB" id="1FRV">
    <property type="method" value="X-ray"/>
    <property type="resolution" value="2.85 A"/>
    <property type="chains" value="B/D=1-536"/>
</dbReference>
<dbReference type="PDB" id="1YQ9">
    <property type="method" value="X-ray"/>
    <property type="resolution" value="2.35 A"/>
    <property type="chains" value="H/I=1-536"/>
</dbReference>
<dbReference type="PDB" id="2FRV">
    <property type="method" value="X-ray"/>
    <property type="resolution" value="2.54 A"/>
    <property type="chains" value="B/D/F/H/J/L=1-536"/>
</dbReference>
<dbReference type="PDBsum" id="1FRV"/>
<dbReference type="PDBsum" id="1YQ9"/>
<dbReference type="PDBsum" id="2FRV"/>
<dbReference type="SMR" id="P12944"/>
<dbReference type="EvolutionaryTrace" id="P12944"/>
<dbReference type="GO" id="GO:0042597">
    <property type="term" value="C:periplasmic space"/>
    <property type="evidence" value="ECO:0007669"/>
    <property type="project" value="UniProtKB-SubCell"/>
</dbReference>
<dbReference type="GO" id="GO:0047806">
    <property type="term" value="F:cytochrome-c3 hydrogenase activity"/>
    <property type="evidence" value="ECO:0007669"/>
    <property type="project" value="UniProtKB-EC"/>
</dbReference>
<dbReference type="GO" id="GO:0008901">
    <property type="term" value="F:ferredoxin hydrogenase activity"/>
    <property type="evidence" value="ECO:0007669"/>
    <property type="project" value="InterPro"/>
</dbReference>
<dbReference type="GO" id="GO:0016151">
    <property type="term" value="F:nickel cation binding"/>
    <property type="evidence" value="ECO:0007669"/>
    <property type="project" value="InterPro"/>
</dbReference>
<dbReference type="FunFam" id="1.10.645.10:FF:000002">
    <property type="entry name" value="Hydrogenase 2 large subunit"/>
    <property type="match status" value="1"/>
</dbReference>
<dbReference type="Gene3D" id="1.10.645.10">
    <property type="entry name" value="Cytochrome-c3 Hydrogenase, chain B"/>
    <property type="match status" value="1"/>
</dbReference>
<dbReference type="InterPro" id="IPR001501">
    <property type="entry name" value="Ni-dep_hyd_lsu"/>
</dbReference>
<dbReference type="InterPro" id="IPR018194">
    <property type="entry name" value="Ni-dep_hyd_lsu_Ni_BS"/>
</dbReference>
<dbReference type="InterPro" id="IPR029014">
    <property type="entry name" value="NiFe-Hase_large"/>
</dbReference>
<dbReference type="InterPro" id="IPR050867">
    <property type="entry name" value="NiFe/NiFeSe_hydrgnase_LSU"/>
</dbReference>
<dbReference type="PANTHER" id="PTHR42958">
    <property type="entry name" value="HYDROGENASE-2 LARGE CHAIN"/>
    <property type="match status" value="1"/>
</dbReference>
<dbReference type="PANTHER" id="PTHR42958:SF2">
    <property type="entry name" value="UPTAKE HYDROGENASE LARGE SUBUNIT"/>
    <property type="match status" value="1"/>
</dbReference>
<dbReference type="Pfam" id="PF00374">
    <property type="entry name" value="NiFeSe_Hases"/>
    <property type="match status" value="1"/>
</dbReference>
<dbReference type="SUPFAM" id="SSF56762">
    <property type="entry name" value="HydB/Nqo4-like"/>
    <property type="match status" value="1"/>
</dbReference>
<dbReference type="PROSITE" id="PS00507">
    <property type="entry name" value="NI_HGENASE_L_1"/>
    <property type="match status" value="1"/>
</dbReference>
<dbReference type="PROSITE" id="PS00508">
    <property type="entry name" value="NI_HGENASE_L_2"/>
    <property type="match status" value="1"/>
</dbReference>